<comment type="function">
    <text evidence="1">This protein binds to the 23S rRNA, and is important in its secondary structure. It is located near the subunit interface in the base of the L7/L12 stalk, and near the tRNA binding site of the peptidyltransferase center.</text>
</comment>
<comment type="subunit">
    <text evidence="1">Part of the 50S ribosomal subunit.</text>
</comment>
<comment type="similarity">
    <text evidence="1">Belongs to the universal ribosomal protein uL6 family.</text>
</comment>
<reference key="1">
    <citation type="journal article" date="2009" name="J. Bacteriol.">
        <title>Complete genome sequence of the anaerobic, protein-degrading hyperthermophilic crenarchaeon Desulfurococcus kamchatkensis.</title>
        <authorList>
            <person name="Ravin N.V."/>
            <person name="Mardanov A.V."/>
            <person name="Beletsky A.V."/>
            <person name="Kublanov I.V."/>
            <person name="Kolganova T.V."/>
            <person name="Lebedinsky A.V."/>
            <person name="Chernyh N.A."/>
            <person name="Bonch-Osmolovskaya E.A."/>
            <person name="Skryabin K.G."/>
        </authorList>
    </citation>
    <scope>NUCLEOTIDE SEQUENCE [LARGE SCALE GENOMIC DNA]</scope>
    <source>
        <strain>DSM 18924 / JCM 16383 / VKM B-2413 / 1221n</strain>
    </source>
</reference>
<dbReference type="EMBL" id="CP001140">
    <property type="protein sequence ID" value="ACL11485.1"/>
    <property type="molecule type" value="Genomic_DNA"/>
</dbReference>
<dbReference type="RefSeq" id="WP_012608826.1">
    <property type="nucleotide sequence ID" value="NC_011766.1"/>
</dbReference>
<dbReference type="SMR" id="B8D5V4"/>
<dbReference type="STRING" id="490899.DKAM_1159"/>
<dbReference type="GeneID" id="7171246"/>
<dbReference type="KEGG" id="dka:DKAM_1159"/>
<dbReference type="eggNOG" id="arCOG04090">
    <property type="taxonomic scope" value="Archaea"/>
</dbReference>
<dbReference type="HOGENOM" id="CLU_065464_0_0_2"/>
<dbReference type="Proteomes" id="UP000006903">
    <property type="component" value="Chromosome"/>
</dbReference>
<dbReference type="GO" id="GO:0022625">
    <property type="term" value="C:cytosolic large ribosomal subunit"/>
    <property type="evidence" value="ECO:0007669"/>
    <property type="project" value="TreeGrafter"/>
</dbReference>
<dbReference type="GO" id="GO:0019843">
    <property type="term" value="F:rRNA binding"/>
    <property type="evidence" value="ECO:0007669"/>
    <property type="project" value="UniProtKB-UniRule"/>
</dbReference>
<dbReference type="GO" id="GO:0003735">
    <property type="term" value="F:structural constituent of ribosome"/>
    <property type="evidence" value="ECO:0007669"/>
    <property type="project" value="InterPro"/>
</dbReference>
<dbReference type="GO" id="GO:0002181">
    <property type="term" value="P:cytoplasmic translation"/>
    <property type="evidence" value="ECO:0007669"/>
    <property type="project" value="TreeGrafter"/>
</dbReference>
<dbReference type="FunFam" id="3.90.930.12:FF:000008">
    <property type="entry name" value="50S ribosomal protein L6"/>
    <property type="match status" value="1"/>
</dbReference>
<dbReference type="Gene3D" id="3.90.930.12">
    <property type="entry name" value="Ribosomal protein L6, alpha-beta domain"/>
    <property type="match status" value="2"/>
</dbReference>
<dbReference type="HAMAP" id="MF_01365_A">
    <property type="entry name" value="Ribosomal_uL6_A"/>
    <property type="match status" value="1"/>
</dbReference>
<dbReference type="InterPro" id="IPR000702">
    <property type="entry name" value="Ribosomal_uL6-like"/>
</dbReference>
<dbReference type="InterPro" id="IPR036789">
    <property type="entry name" value="Ribosomal_uL6-like_a/b-dom_sf"/>
</dbReference>
<dbReference type="InterPro" id="IPR020040">
    <property type="entry name" value="Ribosomal_uL6_a/b-dom"/>
</dbReference>
<dbReference type="InterPro" id="IPR019907">
    <property type="entry name" value="Ribosomal_uL6_arc"/>
</dbReference>
<dbReference type="NCBIfam" id="NF004037">
    <property type="entry name" value="PRK05518.1"/>
    <property type="match status" value="1"/>
</dbReference>
<dbReference type="NCBIfam" id="TIGR03653">
    <property type="entry name" value="uL6_arch"/>
    <property type="match status" value="1"/>
</dbReference>
<dbReference type="PANTHER" id="PTHR11655:SF16">
    <property type="entry name" value="60S RIBOSOMAL PROTEIN L9"/>
    <property type="match status" value="1"/>
</dbReference>
<dbReference type="PANTHER" id="PTHR11655">
    <property type="entry name" value="60S/50S RIBOSOMAL PROTEIN L6/L9"/>
    <property type="match status" value="1"/>
</dbReference>
<dbReference type="Pfam" id="PF00347">
    <property type="entry name" value="Ribosomal_L6"/>
    <property type="match status" value="2"/>
</dbReference>
<dbReference type="PIRSF" id="PIRSF002162">
    <property type="entry name" value="Ribosomal_L6"/>
    <property type="match status" value="1"/>
</dbReference>
<dbReference type="SUPFAM" id="SSF56053">
    <property type="entry name" value="Ribosomal protein L6"/>
    <property type="match status" value="2"/>
</dbReference>
<keyword id="KW-0687">Ribonucleoprotein</keyword>
<keyword id="KW-0689">Ribosomal protein</keyword>
<keyword id="KW-0694">RNA-binding</keyword>
<keyword id="KW-0699">rRNA-binding</keyword>
<name>RL6_DESA1</name>
<organism>
    <name type="scientific">Desulfurococcus amylolyticus (strain DSM 18924 / JCM 16383 / VKM B-2413 / 1221n)</name>
    <name type="common">Desulfurococcus kamchatkensis</name>
    <dbReference type="NCBI Taxonomy" id="490899"/>
    <lineage>
        <taxon>Archaea</taxon>
        <taxon>Thermoproteota</taxon>
        <taxon>Thermoprotei</taxon>
        <taxon>Desulfurococcales</taxon>
        <taxon>Desulfurococcaceae</taxon>
        <taxon>Desulfurococcus</taxon>
    </lineage>
</organism>
<sequence>MARVFHVAEKVEIPENVAVEVDGLRVTVKGPKGIITRDFSHARGVFIRLEDRVVIVETFVADRKQKALVGTIAAHIRNMITGVVRGYRYKLKIIFSHFPITVSVDEKNKVVRIRNFMGEKSDRIAKIYGNVKVKVSGEDIIIEGVDIEEVGLTAASIERATRVTDRDRRVFMDGIYIYEKGEAL</sequence>
<accession>B8D5V4</accession>
<proteinExistence type="inferred from homology"/>
<feature type="chain" id="PRO_1000166807" description="Large ribosomal subunit protein uL6">
    <location>
        <begin position="1"/>
        <end position="184"/>
    </location>
</feature>
<gene>
    <name evidence="1" type="primary">rpl6</name>
    <name type="ordered locus">DKAM_1159</name>
</gene>
<protein>
    <recommendedName>
        <fullName evidence="1">Large ribosomal subunit protein uL6</fullName>
    </recommendedName>
    <alternativeName>
        <fullName evidence="2">50S ribosomal protein L6</fullName>
    </alternativeName>
</protein>
<evidence type="ECO:0000255" key="1">
    <source>
        <dbReference type="HAMAP-Rule" id="MF_01365"/>
    </source>
</evidence>
<evidence type="ECO:0000305" key="2"/>